<comment type="similarity">
    <text evidence="4">In the N-terminal section; belongs to the site-specific recombinase resolvase family.</text>
</comment>
<evidence type="ECO:0000255" key="1"/>
<evidence type="ECO:0000255" key="2">
    <source>
        <dbReference type="PROSITE-ProRule" id="PRU01072"/>
    </source>
</evidence>
<evidence type="ECO:0000255" key="3">
    <source>
        <dbReference type="PROSITE-ProRule" id="PRU01073"/>
    </source>
</evidence>
<evidence type="ECO:0000305" key="4"/>
<sequence>MELKNIVNSYNITNILGYLRRSRQDMEREKRTGEDTLTEQKELMNKILTAIEIPYELKMEIGSGESIDGRPVFKECLKDLEEGKYQAIAVKEITRLSRGSYSDAGQIVNLLQSKRLIIITPYKVYDPRNPVDMRQIRFELFMAREEFEMTRERMTGAKYTYAAQGKWISGLAPYGYQLNKKTSKLDPVEDEAKVVQLIFNIFLNGLNGKDYSYTAIASHLTNLQIPTPSGKKRWNQYTIKAILQNEVYIGTVKYKVREKTKDGKRTIRPEKEQIVVQDAHAPIIDKEQFQQSQVKIANKVPLLPNKDEFELSELAGVCTCSKCGEPLSKYESKRIRKNKDGTESVYHVKSLTCKKNKCTYVRYNDVENAILDYLSSLNDLNDSTLTKHINSMLSKYEDDNSNMKTKKQMSEHLSQKEKELKNKENFIFDKYESGIYSDELFLKRKAALDEEFKELQNAKNELNGLQDTQSEIDSNTVRNNINKIIDQYHIESSSEKKNELLRMVLKDVIVNMTQKRKGPIPAQFEITPILRFNFIFDLTATNSFH</sequence>
<reference key="1">
    <citation type="journal article" date="1997" name="Nature">
        <title>The complete genome sequence of the Gram-positive bacterium Bacillus subtilis.</title>
        <authorList>
            <person name="Kunst F."/>
            <person name="Ogasawara N."/>
            <person name="Moszer I."/>
            <person name="Albertini A.M."/>
            <person name="Alloni G."/>
            <person name="Azevedo V."/>
            <person name="Bertero M.G."/>
            <person name="Bessieres P."/>
            <person name="Bolotin A."/>
            <person name="Borchert S."/>
            <person name="Borriss R."/>
            <person name="Boursier L."/>
            <person name="Brans A."/>
            <person name="Braun M."/>
            <person name="Brignell S.C."/>
            <person name="Bron S."/>
            <person name="Brouillet S."/>
            <person name="Bruschi C.V."/>
            <person name="Caldwell B."/>
            <person name="Capuano V."/>
            <person name="Carter N.M."/>
            <person name="Choi S.-K."/>
            <person name="Codani J.-J."/>
            <person name="Connerton I.F."/>
            <person name="Cummings N.J."/>
            <person name="Daniel R.A."/>
            <person name="Denizot F."/>
            <person name="Devine K.M."/>
            <person name="Duesterhoeft A."/>
            <person name="Ehrlich S.D."/>
            <person name="Emmerson P.T."/>
            <person name="Entian K.-D."/>
            <person name="Errington J."/>
            <person name="Fabret C."/>
            <person name="Ferrari E."/>
            <person name="Foulger D."/>
            <person name="Fritz C."/>
            <person name="Fujita M."/>
            <person name="Fujita Y."/>
            <person name="Fuma S."/>
            <person name="Galizzi A."/>
            <person name="Galleron N."/>
            <person name="Ghim S.-Y."/>
            <person name="Glaser P."/>
            <person name="Goffeau A."/>
            <person name="Golightly E.J."/>
            <person name="Grandi G."/>
            <person name="Guiseppi G."/>
            <person name="Guy B.J."/>
            <person name="Haga K."/>
            <person name="Haiech J."/>
            <person name="Harwood C.R."/>
            <person name="Henaut A."/>
            <person name="Hilbert H."/>
            <person name="Holsappel S."/>
            <person name="Hosono S."/>
            <person name="Hullo M.-F."/>
            <person name="Itaya M."/>
            <person name="Jones L.-M."/>
            <person name="Joris B."/>
            <person name="Karamata D."/>
            <person name="Kasahara Y."/>
            <person name="Klaerr-Blanchard M."/>
            <person name="Klein C."/>
            <person name="Kobayashi Y."/>
            <person name="Koetter P."/>
            <person name="Koningstein G."/>
            <person name="Krogh S."/>
            <person name="Kumano M."/>
            <person name="Kurita K."/>
            <person name="Lapidus A."/>
            <person name="Lardinois S."/>
            <person name="Lauber J."/>
            <person name="Lazarevic V."/>
            <person name="Lee S.-M."/>
            <person name="Levine A."/>
            <person name="Liu H."/>
            <person name="Masuda S."/>
            <person name="Mauel C."/>
            <person name="Medigue C."/>
            <person name="Medina N."/>
            <person name="Mellado R.P."/>
            <person name="Mizuno M."/>
            <person name="Moestl D."/>
            <person name="Nakai S."/>
            <person name="Noback M."/>
            <person name="Noone D."/>
            <person name="O'Reilly M."/>
            <person name="Ogawa K."/>
            <person name="Ogiwara A."/>
            <person name="Oudega B."/>
            <person name="Park S.-H."/>
            <person name="Parro V."/>
            <person name="Pohl T.M."/>
            <person name="Portetelle D."/>
            <person name="Porwollik S."/>
            <person name="Prescott A.M."/>
            <person name="Presecan E."/>
            <person name="Pujic P."/>
            <person name="Purnelle B."/>
            <person name="Rapoport G."/>
            <person name="Rey M."/>
            <person name="Reynolds S."/>
            <person name="Rieger M."/>
            <person name="Rivolta C."/>
            <person name="Rocha E."/>
            <person name="Roche B."/>
            <person name="Rose M."/>
            <person name="Sadaie Y."/>
            <person name="Sato T."/>
            <person name="Scanlan E."/>
            <person name="Schleich S."/>
            <person name="Schroeter R."/>
            <person name="Scoffone F."/>
            <person name="Sekiguchi J."/>
            <person name="Sekowska A."/>
            <person name="Seror S.J."/>
            <person name="Serror P."/>
            <person name="Shin B.-S."/>
            <person name="Soldo B."/>
            <person name="Sorokin A."/>
            <person name="Tacconi E."/>
            <person name="Takagi T."/>
            <person name="Takahashi H."/>
            <person name="Takemaru K."/>
            <person name="Takeuchi M."/>
            <person name="Tamakoshi A."/>
            <person name="Tanaka T."/>
            <person name="Terpstra P."/>
            <person name="Tognoni A."/>
            <person name="Tosato V."/>
            <person name="Uchiyama S."/>
            <person name="Vandenbol M."/>
            <person name="Vannier F."/>
            <person name="Vassarotti A."/>
            <person name="Viari A."/>
            <person name="Wambutt R."/>
            <person name="Wedler E."/>
            <person name="Wedler H."/>
            <person name="Weitzenegger T."/>
            <person name="Winters P."/>
            <person name="Wipat A."/>
            <person name="Yamamoto H."/>
            <person name="Yamane K."/>
            <person name="Yasumoto K."/>
            <person name="Yata K."/>
            <person name="Yoshida K."/>
            <person name="Yoshikawa H.-F."/>
            <person name="Zumstein E."/>
            <person name="Yoshikawa H."/>
            <person name="Danchin A."/>
        </authorList>
    </citation>
    <scope>NUCLEOTIDE SEQUENCE [LARGE SCALE GENOMIC DNA]</scope>
    <source>
        <strain>168</strain>
    </source>
</reference>
<keyword id="KW-0175">Coiled coil</keyword>
<keyword id="KW-0229">DNA integration</keyword>
<keyword id="KW-0233">DNA recombination</keyword>
<keyword id="KW-0238">DNA-binding</keyword>
<keyword id="KW-1185">Reference proteome</keyword>
<proteinExistence type="inferred from homology"/>
<feature type="chain" id="PRO_0000390400" description="Resolvase homolog YokA">
    <location>
        <begin position="1"/>
        <end position="545"/>
    </location>
</feature>
<feature type="domain" description="Resolvase/invertase-type recombinase catalytic" evidence="2">
    <location>
        <begin position="14"/>
        <end position="165"/>
    </location>
</feature>
<feature type="DNA-binding region" description="Recombinase" evidence="3">
    <location>
        <begin position="173"/>
        <end position="303"/>
    </location>
</feature>
<feature type="coiled-coil region" evidence="1">
    <location>
        <begin position="19"/>
        <end position="46"/>
    </location>
</feature>
<feature type="coiled-coil region" evidence="1">
    <location>
        <begin position="402"/>
        <end position="475"/>
    </location>
</feature>
<feature type="active site" description="O-(5'-phospho-DNA)-serine intermediate" evidence="2">
    <location>
        <position position="22"/>
    </location>
</feature>
<gene>
    <name type="primary">yokA</name>
    <name type="ordered locus">BSU21660</name>
</gene>
<name>YOKA_BACSU</name>
<protein>
    <recommendedName>
        <fullName>Resolvase homolog YokA</fullName>
    </recommendedName>
</protein>
<accession>O32006</accession>
<organism>
    <name type="scientific">Bacillus subtilis (strain 168)</name>
    <dbReference type="NCBI Taxonomy" id="224308"/>
    <lineage>
        <taxon>Bacteria</taxon>
        <taxon>Bacillati</taxon>
        <taxon>Bacillota</taxon>
        <taxon>Bacilli</taxon>
        <taxon>Bacillales</taxon>
        <taxon>Bacillaceae</taxon>
        <taxon>Bacillus</taxon>
    </lineage>
</organism>
<dbReference type="EMBL" id="AL009126">
    <property type="protein sequence ID" value="CAB14084.1"/>
    <property type="molecule type" value="Genomic_DNA"/>
</dbReference>
<dbReference type="SMR" id="O32006"/>
<dbReference type="FunCoup" id="O32006">
    <property type="interactions" value="12"/>
</dbReference>
<dbReference type="STRING" id="224308.BSU21660"/>
<dbReference type="PaxDb" id="224308-BSU21660"/>
<dbReference type="EnsemblBacteria" id="CAB14084">
    <property type="protein sequence ID" value="CAB14084"/>
    <property type="gene ID" value="BSU_21660"/>
</dbReference>
<dbReference type="GeneID" id="939105"/>
<dbReference type="KEGG" id="bsu:BSU21660"/>
<dbReference type="PATRIC" id="fig|224308.179.peg.2367"/>
<dbReference type="eggNOG" id="COG1961">
    <property type="taxonomic scope" value="Bacteria"/>
</dbReference>
<dbReference type="InParanoid" id="O32006"/>
<dbReference type="OrthoDB" id="65783at2"/>
<dbReference type="PhylomeDB" id="O32006"/>
<dbReference type="BioCyc" id="BSUB:BSU21660-MONOMER"/>
<dbReference type="Proteomes" id="UP000001570">
    <property type="component" value="Chromosome"/>
</dbReference>
<dbReference type="GO" id="GO:0003677">
    <property type="term" value="F:DNA binding"/>
    <property type="evidence" value="ECO:0007669"/>
    <property type="project" value="UniProtKB-KW"/>
</dbReference>
<dbReference type="GO" id="GO:0000150">
    <property type="term" value="F:DNA strand exchange activity"/>
    <property type="evidence" value="ECO:0000318"/>
    <property type="project" value="GO_Central"/>
</dbReference>
<dbReference type="GO" id="GO:0015074">
    <property type="term" value="P:DNA integration"/>
    <property type="evidence" value="ECO:0007669"/>
    <property type="project" value="UniProtKB-KW"/>
</dbReference>
<dbReference type="GO" id="GO:0006310">
    <property type="term" value="P:DNA recombination"/>
    <property type="evidence" value="ECO:0000318"/>
    <property type="project" value="GO_Central"/>
</dbReference>
<dbReference type="CDD" id="cd00338">
    <property type="entry name" value="Ser_Recombinase"/>
    <property type="match status" value="1"/>
</dbReference>
<dbReference type="Gene3D" id="3.90.1750.20">
    <property type="entry name" value="Putative Large Serine Recombinase, Chain B, Domain 2"/>
    <property type="match status" value="1"/>
</dbReference>
<dbReference type="Gene3D" id="3.40.50.1390">
    <property type="entry name" value="Resolvase, N-terminal catalytic domain"/>
    <property type="match status" value="1"/>
</dbReference>
<dbReference type="InterPro" id="IPR038109">
    <property type="entry name" value="DNA_bind_recomb_sf"/>
</dbReference>
<dbReference type="InterPro" id="IPR011109">
    <property type="entry name" value="DNA_bind_recombinase_dom"/>
</dbReference>
<dbReference type="InterPro" id="IPR006119">
    <property type="entry name" value="Resolv_N"/>
</dbReference>
<dbReference type="InterPro" id="IPR036162">
    <property type="entry name" value="Resolvase-like_N_sf"/>
</dbReference>
<dbReference type="InterPro" id="IPR050639">
    <property type="entry name" value="SSR_resolvase"/>
</dbReference>
<dbReference type="PANTHER" id="PTHR30461:SF23">
    <property type="entry name" value="DNA RECOMBINASE-RELATED"/>
    <property type="match status" value="1"/>
</dbReference>
<dbReference type="PANTHER" id="PTHR30461">
    <property type="entry name" value="DNA-INVERTASE FROM LAMBDOID PROPHAGE"/>
    <property type="match status" value="1"/>
</dbReference>
<dbReference type="Pfam" id="PF07508">
    <property type="entry name" value="Recombinase"/>
    <property type="match status" value="1"/>
</dbReference>
<dbReference type="Pfam" id="PF00239">
    <property type="entry name" value="Resolvase"/>
    <property type="match status" value="1"/>
</dbReference>
<dbReference type="SMART" id="SM00857">
    <property type="entry name" value="Resolvase"/>
    <property type="match status" value="1"/>
</dbReference>
<dbReference type="SUPFAM" id="SSF53041">
    <property type="entry name" value="Resolvase-like"/>
    <property type="match status" value="1"/>
</dbReference>
<dbReference type="PROSITE" id="PS51737">
    <property type="entry name" value="RECOMBINASE_DNA_BIND"/>
    <property type="match status" value="1"/>
</dbReference>
<dbReference type="PROSITE" id="PS51736">
    <property type="entry name" value="RECOMBINASES_3"/>
    <property type="match status" value="1"/>
</dbReference>